<reference key="1">
    <citation type="submission" date="2008-12" db="EMBL/GenBank/DDBJ databases">
        <title>Complete sequence of chromosome of Methylobacterium chloromethanicum CM4.</title>
        <authorList>
            <consortium name="US DOE Joint Genome Institute"/>
            <person name="Lucas S."/>
            <person name="Copeland A."/>
            <person name="Lapidus A."/>
            <person name="Glavina del Rio T."/>
            <person name="Dalin E."/>
            <person name="Tice H."/>
            <person name="Bruce D."/>
            <person name="Goodwin L."/>
            <person name="Pitluck S."/>
            <person name="Chertkov O."/>
            <person name="Brettin T."/>
            <person name="Detter J.C."/>
            <person name="Han C."/>
            <person name="Larimer F."/>
            <person name="Land M."/>
            <person name="Hauser L."/>
            <person name="Kyrpides N."/>
            <person name="Mikhailova N."/>
            <person name="Marx C."/>
            <person name="Richardson P."/>
        </authorList>
    </citation>
    <scope>NUCLEOTIDE SEQUENCE [LARGE SCALE GENOMIC DNA]</scope>
    <source>
        <strain>CM4 / NCIMB 13688</strain>
    </source>
</reference>
<proteinExistence type="inferred from homology"/>
<organism>
    <name type="scientific">Methylorubrum extorquens (strain CM4 / NCIMB 13688)</name>
    <name type="common">Methylobacterium extorquens</name>
    <dbReference type="NCBI Taxonomy" id="440085"/>
    <lineage>
        <taxon>Bacteria</taxon>
        <taxon>Pseudomonadati</taxon>
        <taxon>Pseudomonadota</taxon>
        <taxon>Alphaproteobacteria</taxon>
        <taxon>Hyphomicrobiales</taxon>
        <taxon>Methylobacteriaceae</taxon>
        <taxon>Methylorubrum</taxon>
    </lineage>
</organism>
<feature type="chain" id="PRO_1000165165" description="Anhydro-N-acetylmuramic acid kinase">
    <location>
        <begin position="1"/>
        <end position="377"/>
    </location>
</feature>
<feature type="binding site" evidence="1">
    <location>
        <begin position="12"/>
        <end position="19"/>
    </location>
    <ligand>
        <name>ATP</name>
        <dbReference type="ChEBI" id="CHEBI:30616"/>
    </ligand>
</feature>
<dbReference type="EC" id="2.7.1.170" evidence="1"/>
<dbReference type="EMBL" id="CP001298">
    <property type="protein sequence ID" value="ACK84052.1"/>
    <property type="molecule type" value="Genomic_DNA"/>
</dbReference>
<dbReference type="RefSeq" id="WP_015951390.1">
    <property type="nucleotide sequence ID" value="NC_011757.1"/>
</dbReference>
<dbReference type="SMR" id="B7KT22"/>
<dbReference type="KEGG" id="mch:Mchl_3214"/>
<dbReference type="HOGENOM" id="CLU_038782_3_0_5"/>
<dbReference type="UniPathway" id="UPA00343"/>
<dbReference type="UniPathway" id="UPA00544"/>
<dbReference type="Proteomes" id="UP000002385">
    <property type="component" value="Chromosome"/>
</dbReference>
<dbReference type="GO" id="GO:0005524">
    <property type="term" value="F:ATP binding"/>
    <property type="evidence" value="ECO:0007669"/>
    <property type="project" value="UniProtKB-UniRule"/>
</dbReference>
<dbReference type="GO" id="GO:0016301">
    <property type="term" value="F:kinase activity"/>
    <property type="evidence" value="ECO:0007669"/>
    <property type="project" value="UniProtKB-KW"/>
</dbReference>
<dbReference type="GO" id="GO:0016773">
    <property type="term" value="F:phosphotransferase activity, alcohol group as acceptor"/>
    <property type="evidence" value="ECO:0007669"/>
    <property type="project" value="UniProtKB-UniRule"/>
</dbReference>
<dbReference type="GO" id="GO:0097175">
    <property type="term" value="P:1,6-anhydro-N-acetyl-beta-muramic acid catabolic process"/>
    <property type="evidence" value="ECO:0007669"/>
    <property type="project" value="UniProtKB-UniRule"/>
</dbReference>
<dbReference type="GO" id="GO:0006040">
    <property type="term" value="P:amino sugar metabolic process"/>
    <property type="evidence" value="ECO:0007669"/>
    <property type="project" value="InterPro"/>
</dbReference>
<dbReference type="GO" id="GO:0009254">
    <property type="term" value="P:peptidoglycan turnover"/>
    <property type="evidence" value="ECO:0007669"/>
    <property type="project" value="UniProtKB-UniRule"/>
</dbReference>
<dbReference type="Gene3D" id="3.30.420.40">
    <property type="match status" value="2"/>
</dbReference>
<dbReference type="HAMAP" id="MF_01270">
    <property type="entry name" value="AnhMurNAc_kinase"/>
    <property type="match status" value="1"/>
</dbReference>
<dbReference type="InterPro" id="IPR005338">
    <property type="entry name" value="Anhydro_N_Ac-Mur_kinase"/>
</dbReference>
<dbReference type="InterPro" id="IPR043129">
    <property type="entry name" value="ATPase_NBD"/>
</dbReference>
<dbReference type="NCBIfam" id="NF007141">
    <property type="entry name" value="PRK09585.1-5"/>
    <property type="match status" value="1"/>
</dbReference>
<dbReference type="PANTHER" id="PTHR30605">
    <property type="entry name" value="ANHYDRO-N-ACETYLMURAMIC ACID KINASE"/>
    <property type="match status" value="1"/>
</dbReference>
<dbReference type="PANTHER" id="PTHR30605:SF0">
    <property type="entry name" value="ANHYDRO-N-ACETYLMURAMIC ACID KINASE"/>
    <property type="match status" value="1"/>
</dbReference>
<dbReference type="Pfam" id="PF03702">
    <property type="entry name" value="AnmK"/>
    <property type="match status" value="1"/>
</dbReference>
<dbReference type="SUPFAM" id="SSF53067">
    <property type="entry name" value="Actin-like ATPase domain"/>
    <property type="match status" value="1"/>
</dbReference>
<gene>
    <name evidence="1" type="primary">anmK</name>
    <name type="ordered locus">Mchl_3214</name>
</gene>
<comment type="function">
    <text evidence="1">Catalyzes the specific phosphorylation of 1,6-anhydro-N-acetylmuramic acid (anhMurNAc) with the simultaneous cleavage of the 1,6-anhydro ring, generating MurNAc-6-P. Is required for the utilization of anhMurNAc either imported from the medium or derived from its own cell wall murein, and thus plays a role in cell wall recycling.</text>
</comment>
<comment type="catalytic activity">
    <reaction evidence="1">
        <text>1,6-anhydro-N-acetyl-beta-muramate + ATP + H2O = N-acetyl-D-muramate 6-phosphate + ADP + H(+)</text>
        <dbReference type="Rhea" id="RHEA:24952"/>
        <dbReference type="ChEBI" id="CHEBI:15377"/>
        <dbReference type="ChEBI" id="CHEBI:15378"/>
        <dbReference type="ChEBI" id="CHEBI:30616"/>
        <dbReference type="ChEBI" id="CHEBI:58690"/>
        <dbReference type="ChEBI" id="CHEBI:58722"/>
        <dbReference type="ChEBI" id="CHEBI:456216"/>
        <dbReference type="EC" id="2.7.1.170"/>
    </reaction>
</comment>
<comment type="pathway">
    <text evidence="1">Amino-sugar metabolism; 1,6-anhydro-N-acetylmuramate degradation.</text>
</comment>
<comment type="pathway">
    <text evidence="1">Cell wall biogenesis; peptidoglycan recycling.</text>
</comment>
<comment type="similarity">
    <text evidence="1">Belongs to the anhydro-N-acetylmuramic acid kinase family.</text>
</comment>
<keyword id="KW-0067">ATP-binding</keyword>
<keyword id="KW-0119">Carbohydrate metabolism</keyword>
<keyword id="KW-0418">Kinase</keyword>
<keyword id="KW-0547">Nucleotide-binding</keyword>
<keyword id="KW-0808">Transferase</keyword>
<accession>B7KT22</accession>
<evidence type="ECO:0000255" key="1">
    <source>
        <dbReference type="HAMAP-Rule" id="MF_01270"/>
    </source>
</evidence>
<protein>
    <recommendedName>
        <fullName evidence="1">Anhydro-N-acetylmuramic acid kinase</fullName>
        <ecNumber evidence="1">2.7.1.170</ecNumber>
    </recommendedName>
    <alternativeName>
        <fullName evidence="1">AnhMurNAc kinase</fullName>
    </alternativeName>
</protein>
<sequence length="377" mass="39671">MAMKRAIGLMSGTSLDGIDVALIESDGERIRLVKSANGLVAPLGPTGYRGYAEAERALLREATRDAEGLRARTDRPGRLAEAEDFVARAHAEAIEAFLAQNDLRPEDIDVVGFHGQTVIHRPKLGLTVQLGDGAALAKRLGIRVVSDMRANDVAQGGQGAPLVPVFHKALAEAAGFTGPLGILNIGGLANATLIDSGGNMLAFDTGPGNGPINDWMKERTGQDFDEGGATAARGTVDEDLLENLLGHPLILRAPPKSLDRNWFSHRLAGYLTVEDGAVTLTAFTAHAVARSLAFASERPARWIVGGGGAKNRTLMVMLERLLAAEVLNADAIGWSSDFLEAQAFAYLALRSLEGLPLTYPTTTGVAAPVTGGIVSEP</sequence>
<name>ANMK_METC4</name>